<comment type="function">
    <text evidence="1">Together with its co-chaperonin GroES, plays an essential role in assisting protein folding. The GroEL-GroES system forms a nano-cage that allows encapsulation of the non-native substrate proteins and provides a physical environment optimized to promote and accelerate protein folding.</text>
</comment>
<comment type="catalytic activity">
    <reaction evidence="1">
        <text>ATP + H2O + a folded polypeptide = ADP + phosphate + an unfolded polypeptide.</text>
        <dbReference type="EC" id="5.6.1.7"/>
    </reaction>
</comment>
<comment type="subunit">
    <text evidence="1">Forms a cylinder of 14 subunits composed of two heptameric rings stacked back-to-back. Interacts with the co-chaperonin GroES.</text>
</comment>
<comment type="subcellular location">
    <subcellularLocation>
        <location evidence="1">Cytoplasm</location>
    </subcellularLocation>
</comment>
<comment type="similarity">
    <text evidence="1">Belongs to the chaperonin (HSP60) family.</text>
</comment>
<gene>
    <name evidence="1" type="primary">groEL1</name>
    <name evidence="1" type="synonym">groL1</name>
    <name type="ordered locus">MCA0707</name>
</gene>
<sequence length="545" mass="57117">MAAKEVKFSDDARTRMLRGVNILAHAVKVTLGPKGRNVVLEKSFGAPTVTKDGVSVAKEIELSDKFENMGAQMVKEVASQTSDVAGDGTTTATVLAQSILTEGLKAVAAGMNPMDLKRGIDKAVAAAVDEIHAMSVPCTDSNAIAQVGTISANADESIGKIIAEAMDKVGKEGVITVEDGSGLENQLDIVEGMQFDRGYLSPYFINNQQSMSAELENPFILINEKKISNIRELLPVLEGVAKAGRPLVIVAEDVEGEALATLVVNNMRGILKVAAVKAPGFGDRRKAMLEDIAVLTGGTVISEDIGLSLEKATLADLGTAKKVQITKENTTIIDGAGSSEAIQGRVAQIRKQIEDTTSDYDREKLQERLAKLAGGVAVIKVGAATEVEMKEKKARVEDALHATRAAVEEGIVPGGGVALIRALAKLRDLKGANHDQDVGISIARRAMEEPLRQIVANAGDEPSVVLNKVAEGAGNFGYNAATGEYGDMVAMGILDPAKVTRSALQNAASVASLMITTEAMVAEEPKEEAPMPGGMGGMGGMGDMM</sequence>
<organism>
    <name type="scientific">Methylococcus capsulatus (strain ATCC 33009 / NCIMB 11132 / Bath)</name>
    <dbReference type="NCBI Taxonomy" id="243233"/>
    <lineage>
        <taxon>Bacteria</taxon>
        <taxon>Pseudomonadati</taxon>
        <taxon>Pseudomonadota</taxon>
        <taxon>Gammaproteobacteria</taxon>
        <taxon>Methylococcales</taxon>
        <taxon>Methylococcaceae</taxon>
        <taxon>Methylococcus</taxon>
    </lineage>
</organism>
<keyword id="KW-0067">ATP-binding</keyword>
<keyword id="KW-0143">Chaperone</keyword>
<keyword id="KW-0963">Cytoplasm</keyword>
<keyword id="KW-0413">Isomerase</keyword>
<keyword id="KW-0547">Nucleotide-binding</keyword>
<keyword id="KW-1185">Reference proteome</keyword>
<dbReference type="EC" id="5.6.1.7" evidence="1"/>
<dbReference type="EMBL" id="AE017282">
    <property type="protein sequence ID" value="AAU93155.1"/>
    <property type="molecule type" value="Genomic_DNA"/>
</dbReference>
<dbReference type="SMR" id="Q60AY0"/>
<dbReference type="STRING" id="243233.MCA0707"/>
<dbReference type="GeneID" id="88223027"/>
<dbReference type="KEGG" id="mca:MCA0707"/>
<dbReference type="eggNOG" id="COG0459">
    <property type="taxonomic scope" value="Bacteria"/>
</dbReference>
<dbReference type="HOGENOM" id="CLU_016503_3_0_6"/>
<dbReference type="Proteomes" id="UP000006821">
    <property type="component" value="Chromosome"/>
</dbReference>
<dbReference type="GO" id="GO:0005737">
    <property type="term" value="C:cytoplasm"/>
    <property type="evidence" value="ECO:0007669"/>
    <property type="project" value="UniProtKB-SubCell"/>
</dbReference>
<dbReference type="GO" id="GO:0005524">
    <property type="term" value="F:ATP binding"/>
    <property type="evidence" value="ECO:0007669"/>
    <property type="project" value="UniProtKB-UniRule"/>
</dbReference>
<dbReference type="GO" id="GO:0140662">
    <property type="term" value="F:ATP-dependent protein folding chaperone"/>
    <property type="evidence" value="ECO:0007669"/>
    <property type="project" value="InterPro"/>
</dbReference>
<dbReference type="GO" id="GO:0016853">
    <property type="term" value="F:isomerase activity"/>
    <property type="evidence" value="ECO:0007669"/>
    <property type="project" value="UniProtKB-KW"/>
</dbReference>
<dbReference type="GO" id="GO:0051082">
    <property type="term" value="F:unfolded protein binding"/>
    <property type="evidence" value="ECO:0007669"/>
    <property type="project" value="UniProtKB-UniRule"/>
</dbReference>
<dbReference type="GO" id="GO:0042026">
    <property type="term" value="P:protein refolding"/>
    <property type="evidence" value="ECO:0007669"/>
    <property type="project" value="UniProtKB-UniRule"/>
</dbReference>
<dbReference type="CDD" id="cd03344">
    <property type="entry name" value="GroEL"/>
    <property type="match status" value="1"/>
</dbReference>
<dbReference type="FunFam" id="1.10.560.10:FF:000001">
    <property type="entry name" value="60 kDa chaperonin"/>
    <property type="match status" value="1"/>
</dbReference>
<dbReference type="FunFam" id="3.50.7.10:FF:000001">
    <property type="entry name" value="60 kDa chaperonin"/>
    <property type="match status" value="1"/>
</dbReference>
<dbReference type="Gene3D" id="3.50.7.10">
    <property type="entry name" value="GroEL"/>
    <property type="match status" value="1"/>
</dbReference>
<dbReference type="Gene3D" id="1.10.560.10">
    <property type="entry name" value="GroEL-like equatorial domain"/>
    <property type="match status" value="1"/>
</dbReference>
<dbReference type="Gene3D" id="3.30.260.10">
    <property type="entry name" value="TCP-1-like chaperonin intermediate domain"/>
    <property type="match status" value="1"/>
</dbReference>
<dbReference type="HAMAP" id="MF_00600">
    <property type="entry name" value="CH60"/>
    <property type="match status" value="1"/>
</dbReference>
<dbReference type="InterPro" id="IPR018370">
    <property type="entry name" value="Chaperonin_Cpn60_CS"/>
</dbReference>
<dbReference type="InterPro" id="IPR001844">
    <property type="entry name" value="Cpn60/GroEL"/>
</dbReference>
<dbReference type="InterPro" id="IPR002423">
    <property type="entry name" value="Cpn60/GroEL/TCP-1"/>
</dbReference>
<dbReference type="InterPro" id="IPR027409">
    <property type="entry name" value="GroEL-like_apical_dom_sf"/>
</dbReference>
<dbReference type="InterPro" id="IPR027413">
    <property type="entry name" value="GROEL-like_equatorial_sf"/>
</dbReference>
<dbReference type="InterPro" id="IPR027410">
    <property type="entry name" value="TCP-1-like_intermed_sf"/>
</dbReference>
<dbReference type="NCBIfam" id="TIGR02348">
    <property type="entry name" value="GroEL"/>
    <property type="match status" value="1"/>
</dbReference>
<dbReference type="NCBIfam" id="NF000592">
    <property type="entry name" value="PRK00013.1"/>
    <property type="match status" value="1"/>
</dbReference>
<dbReference type="NCBIfam" id="NF009487">
    <property type="entry name" value="PRK12849.1"/>
    <property type="match status" value="1"/>
</dbReference>
<dbReference type="NCBIfam" id="NF009488">
    <property type="entry name" value="PRK12850.1"/>
    <property type="match status" value="1"/>
</dbReference>
<dbReference type="NCBIfam" id="NF009489">
    <property type="entry name" value="PRK12851.1"/>
    <property type="match status" value="1"/>
</dbReference>
<dbReference type="PANTHER" id="PTHR45633">
    <property type="entry name" value="60 KDA HEAT SHOCK PROTEIN, MITOCHONDRIAL"/>
    <property type="match status" value="1"/>
</dbReference>
<dbReference type="Pfam" id="PF00118">
    <property type="entry name" value="Cpn60_TCP1"/>
    <property type="match status" value="1"/>
</dbReference>
<dbReference type="PRINTS" id="PR00298">
    <property type="entry name" value="CHAPERONIN60"/>
</dbReference>
<dbReference type="SUPFAM" id="SSF52029">
    <property type="entry name" value="GroEL apical domain-like"/>
    <property type="match status" value="1"/>
</dbReference>
<dbReference type="SUPFAM" id="SSF48592">
    <property type="entry name" value="GroEL equatorial domain-like"/>
    <property type="match status" value="1"/>
</dbReference>
<dbReference type="SUPFAM" id="SSF54849">
    <property type="entry name" value="GroEL-intermediate domain like"/>
    <property type="match status" value="1"/>
</dbReference>
<dbReference type="PROSITE" id="PS00296">
    <property type="entry name" value="CHAPERONINS_CPN60"/>
    <property type="match status" value="1"/>
</dbReference>
<evidence type="ECO:0000255" key="1">
    <source>
        <dbReference type="HAMAP-Rule" id="MF_00600"/>
    </source>
</evidence>
<feature type="chain" id="PRO_0000063416" description="Chaperonin GroEL 1">
    <location>
        <begin position="1"/>
        <end position="545"/>
    </location>
</feature>
<feature type="binding site" evidence="1">
    <location>
        <begin position="30"/>
        <end position="33"/>
    </location>
    <ligand>
        <name>ATP</name>
        <dbReference type="ChEBI" id="CHEBI:30616"/>
    </ligand>
</feature>
<feature type="binding site" evidence="1">
    <location>
        <position position="51"/>
    </location>
    <ligand>
        <name>ATP</name>
        <dbReference type="ChEBI" id="CHEBI:30616"/>
    </ligand>
</feature>
<feature type="binding site" evidence="1">
    <location>
        <begin position="87"/>
        <end position="91"/>
    </location>
    <ligand>
        <name>ATP</name>
        <dbReference type="ChEBI" id="CHEBI:30616"/>
    </ligand>
</feature>
<feature type="binding site" evidence="1">
    <location>
        <position position="415"/>
    </location>
    <ligand>
        <name>ATP</name>
        <dbReference type="ChEBI" id="CHEBI:30616"/>
    </ligand>
</feature>
<feature type="binding site" evidence="1">
    <location>
        <begin position="479"/>
        <end position="481"/>
    </location>
    <ligand>
        <name>ATP</name>
        <dbReference type="ChEBI" id="CHEBI:30616"/>
    </ligand>
</feature>
<feature type="binding site" evidence="1">
    <location>
        <position position="495"/>
    </location>
    <ligand>
        <name>ATP</name>
        <dbReference type="ChEBI" id="CHEBI:30616"/>
    </ligand>
</feature>
<name>CH601_METCA</name>
<reference key="1">
    <citation type="journal article" date="2004" name="PLoS Biol.">
        <title>Genomic insights into methanotrophy: the complete genome sequence of Methylococcus capsulatus (Bath).</title>
        <authorList>
            <person name="Ward N.L."/>
            <person name="Larsen O."/>
            <person name="Sakwa J."/>
            <person name="Bruseth L."/>
            <person name="Khouri H.M."/>
            <person name="Durkin A.S."/>
            <person name="Dimitrov G."/>
            <person name="Jiang L."/>
            <person name="Scanlan D."/>
            <person name="Kang K.H."/>
            <person name="Lewis M.R."/>
            <person name="Nelson K.E."/>
            <person name="Methe B.A."/>
            <person name="Wu M."/>
            <person name="Heidelberg J.F."/>
            <person name="Paulsen I.T."/>
            <person name="Fouts D.E."/>
            <person name="Ravel J."/>
            <person name="Tettelin H."/>
            <person name="Ren Q."/>
            <person name="Read T.D."/>
            <person name="DeBoy R.T."/>
            <person name="Seshadri R."/>
            <person name="Salzberg S.L."/>
            <person name="Jensen H.B."/>
            <person name="Birkeland N.K."/>
            <person name="Nelson W.C."/>
            <person name="Dodson R.J."/>
            <person name="Grindhaug S.H."/>
            <person name="Holt I.E."/>
            <person name="Eidhammer I."/>
            <person name="Jonasen I."/>
            <person name="Vanaken S."/>
            <person name="Utterback T.R."/>
            <person name="Feldblyum T.V."/>
            <person name="Fraser C.M."/>
            <person name="Lillehaug J.R."/>
            <person name="Eisen J.A."/>
        </authorList>
    </citation>
    <scope>NUCLEOTIDE SEQUENCE [LARGE SCALE GENOMIC DNA]</scope>
    <source>
        <strain>ATCC 33009 / NCIMB 11132 / Bath</strain>
    </source>
</reference>
<protein>
    <recommendedName>
        <fullName evidence="1">Chaperonin GroEL 1</fullName>
        <ecNumber evidence="1">5.6.1.7</ecNumber>
    </recommendedName>
    <alternativeName>
        <fullName evidence="1">60 kDa chaperonin 1</fullName>
    </alternativeName>
    <alternativeName>
        <fullName evidence="1">Chaperonin-60 1</fullName>
        <shortName evidence="1">Cpn60 1</shortName>
    </alternativeName>
</protein>
<accession>Q60AY0</accession>
<proteinExistence type="inferred from homology"/>